<name>CYB_HYPTE</name>
<feature type="chain" id="PRO_0000061057" description="Cytochrome b">
    <location>
        <begin position="1"/>
        <end position="378"/>
    </location>
</feature>
<feature type="transmembrane region" description="Helical" evidence="2">
    <location>
        <begin position="33"/>
        <end position="53"/>
    </location>
</feature>
<feature type="transmembrane region" description="Helical" evidence="2">
    <location>
        <begin position="77"/>
        <end position="98"/>
    </location>
</feature>
<feature type="transmembrane region" description="Helical" evidence="2">
    <location>
        <begin position="113"/>
        <end position="133"/>
    </location>
</feature>
<feature type="transmembrane region" description="Helical" evidence="2">
    <location>
        <begin position="178"/>
        <end position="198"/>
    </location>
</feature>
<feature type="transmembrane region" description="Helical" evidence="2">
    <location>
        <begin position="226"/>
        <end position="246"/>
    </location>
</feature>
<feature type="transmembrane region" description="Helical" evidence="2">
    <location>
        <begin position="288"/>
        <end position="308"/>
    </location>
</feature>
<feature type="transmembrane region" description="Helical" evidence="2">
    <location>
        <begin position="320"/>
        <end position="340"/>
    </location>
</feature>
<feature type="transmembrane region" description="Helical" evidence="2">
    <location>
        <begin position="347"/>
        <end position="367"/>
    </location>
</feature>
<feature type="binding site" description="axial binding residue" evidence="2">
    <location>
        <position position="83"/>
    </location>
    <ligand>
        <name>heme b</name>
        <dbReference type="ChEBI" id="CHEBI:60344"/>
        <label>b562</label>
    </ligand>
    <ligandPart>
        <name>Fe</name>
        <dbReference type="ChEBI" id="CHEBI:18248"/>
    </ligandPart>
</feature>
<feature type="binding site" description="axial binding residue" evidence="2">
    <location>
        <position position="97"/>
    </location>
    <ligand>
        <name>heme b</name>
        <dbReference type="ChEBI" id="CHEBI:60344"/>
        <label>b566</label>
    </ligand>
    <ligandPart>
        <name>Fe</name>
        <dbReference type="ChEBI" id="CHEBI:18248"/>
    </ligandPart>
</feature>
<feature type="binding site" description="axial binding residue" evidence="2">
    <location>
        <position position="182"/>
    </location>
    <ligand>
        <name>heme b</name>
        <dbReference type="ChEBI" id="CHEBI:60344"/>
        <label>b562</label>
    </ligand>
    <ligandPart>
        <name>Fe</name>
        <dbReference type="ChEBI" id="CHEBI:18248"/>
    </ligandPart>
</feature>
<feature type="binding site" description="axial binding residue" evidence="2">
    <location>
        <position position="196"/>
    </location>
    <ligand>
        <name>heme b</name>
        <dbReference type="ChEBI" id="CHEBI:60344"/>
        <label>b566</label>
    </ligand>
    <ligandPart>
        <name>Fe</name>
        <dbReference type="ChEBI" id="CHEBI:18248"/>
    </ligandPart>
</feature>
<feature type="binding site" evidence="2">
    <location>
        <position position="201"/>
    </location>
    <ligand>
        <name>a ubiquinone</name>
        <dbReference type="ChEBI" id="CHEBI:16389"/>
    </ligand>
</feature>
<sequence>MANLRKTHPLLKIANDALIDLPAPSNISVWWNFGSLLGLCLAAQILTGLFLAMHYTSDIATAFSSVAHICRDVNYGWLIRDMHANGASFFFICIYLHIGRGLYYGSYLYKETWNVGVILLLLVMMTAFVGYVLPWGQMSFWGATVITNLLSAIPYIGNSLVQWLWGGFSVDNATLTRFFAFHFLLPFIIAAMTMIHLIFLHETGSTNPAGLNSDTDKISFHPYFSYKDLLGFAILLIALIALALFSPNLLGDPDNLTPANPLVTPPHIKPEWYFLFAYAILRSIPNKLGGVLALLFSILILMLVPVLHTSKLRALTFRPLTQFLFWLLIADVAILTWIGGMPVEHPFIIIGQVASFLYFFIFLILLPTAGLAENKMFA</sequence>
<accession>Q8LZ94</accession>
<dbReference type="EMBL" id="AY050612">
    <property type="protein sequence ID" value="AAL08376.1"/>
    <property type="molecule type" value="Genomic_DNA"/>
</dbReference>
<dbReference type="SMR" id="Q8LZ94"/>
<dbReference type="GO" id="GO:0005743">
    <property type="term" value="C:mitochondrial inner membrane"/>
    <property type="evidence" value="ECO:0007669"/>
    <property type="project" value="UniProtKB-SubCell"/>
</dbReference>
<dbReference type="GO" id="GO:0045275">
    <property type="term" value="C:respiratory chain complex III"/>
    <property type="evidence" value="ECO:0007669"/>
    <property type="project" value="InterPro"/>
</dbReference>
<dbReference type="GO" id="GO:0046872">
    <property type="term" value="F:metal ion binding"/>
    <property type="evidence" value="ECO:0007669"/>
    <property type="project" value="UniProtKB-KW"/>
</dbReference>
<dbReference type="GO" id="GO:0008121">
    <property type="term" value="F:ubiquinol-cytochrome-c reductase activity"/>
    <property type="evidence" value="ECO:0007669"/>
    <property type="project" value="InterPro"/>
</dbReference>
<dbReference type="GO" id="GO:0006122">
    <property type="term" value="P:mitochondrial electron transport, ubiquinol to cytochrome c"/>
    <property type="evidence" value="ECO:0007669"/>
    <property type="project" value="TreeGrafter"/>
</dbReference>
<dbReference type="CDD" id="cd00290">
    <property type="entry name" value="cytochrome_b_C"/>
    <property type="match status" value="1"/>
</dbReference>
<dbReference type="CDD" id="cd00284">
    <property type="entry name" value="Cytochrome_b_N"/>
    <property type="match status" value="1"/>
</dbReference>
<dbReference type="FunFam" id="1.20.810.10:FF:000002">
    <property type="entry name" value="Cytochrome b"/>
    <property type="match status" value="1"/>
</dbReference>
<dbReference type="Gene3D" id="1.20.810.10">
    <property type="entry name" value="Cytochrome Bc1 Complex, Chain C"/>
    <property type="match status" value="1"/>
</dbReference>
<dbReference type="InterPro" id="IPR005798">
    <property type="entry name" value="Cyt_b/b6_C"/>
</dbReference>
<dbReference type="InterPro" id="IPR036150">
    <property type="entry name" value="Cyt_b/b6_C_sf"/>
</dbReference>
<dbReference type="InterPro" id="IPR005797">
    <property type="entry name" value="Cyt_b/b6_N"/>
</dbReference>
<dbReference type="InterPro" id="IPR027387">
    <property type="entry name" value="Cytb/b6-like_sf"/>
</dbReference>
<dbReference type="InterPro" id="IPR030689">
    <property type="entry name" value="Cytochrome_b"/>
</dbReference>
<dbReference type="InterPro" id="IPR048260">
    <property type="entry name" value="Cytochrome_b_C_euk/bac"/>
</dbReference>
<dbReference type="InterPro" id="IPR048259">
    <property type="entry name" value="Cytochrome_b_N_euk/bac"/>
</dbReference>
<dbReference type="InterPro" id="IPR016174">
    <property type="entry name" value="Di-haem_cyt_TM"/>
</dbReference>
<dbReference type="PANTHER" id="PTHR19271">
    <property type="entry name" value="CYTOCHROME B"/>
    <property type="match status" value="1"/>
</dbReference>
<dbReference type="PANTHER" id="PTHR19271:SF16">
    <property type="entry name" value="CYTOCHROME B"/>
    <property type="match status" value="1"/>
</dbReference>
<dbReference type="Pfam" id="PF00032">
    <property type="entry name" value="Cytochrom_B_C"/>
    <property type="match status" value="1"/>
</dbReference>
<dbReference type="Pfam" id="PF00033">
    <property type="entry name" value="Cytochrome_B"/>
    <property type="match status" value="1"/>
</dbReference>
<dbReference type="PIRSF" id="PIRSF038885">
    <property type="entry name" value="COB"/>
    <property type="match status" value="1"/>
</dbReference>
<dbReference type="SUPFAM" id="SSF81648">
    <property type="entry name" value="a domain/subunit of cytochrome bc1 complex (Ubiquinol-cytochrome c reductase)"/>
    <property type="match status" value="1"/>
</dbReference>
<dbReference type="SUPFAM" id="SSF81342">
    <property type="entry name" value="Transmembrane di-heme cytochromes"/>
    <property type="match status" value="1"/>
</dbReference>
<dbReference type="PROSITE" id="PS51003">
    <property type="entry name" value="CYTB_CTER"/>
    <property type="match status" value="1"/>
</dbReference>
<dbReference type="PROSITE" id="PS51002">
    <property type="entry name" value="CYTB_NTER"/>
    <property type="match status" value="1"/>
</dbReference>
<keyword id="KW-0249">Electron transport</keyword>
<keyword id="KW-0349">Heme</keyword>
<keyword id="KW-0408">Iron</keyword>
<keyword id="KW-0472">Membrane</keyword>
<keyword id="KW-0479">Metal-binding</keyword>
<keyword id="KW-0496">Mitochondrion</keyword>
<keyword id="KW-0999">Mitochondrion inner membrane</keyword>
<keyword id="KW-0679">Respiratory chain</keyword>
<keyword id="KW-0812">Transmembrane</keyword>
<keyword id="KW-1133">Transmembrane helix</keyword>
<keyword id="KW-0813">Transport</keyword>
<keyword id="KW-0830">Ubiquinone</keyword>
<proteinExistence type="inferred from homology"/>
<organism>
    <name type="scientific">Hypselecara temporalis</name>
    <name type="common">Emerald cichlid</name>
    <name type="synonym">Heros temperalis</name>
    <dbReference type="NCBI Taxonomy" id="172532"/>
    <lineage>
        <taxon>Eukaryota</taxon>
        <taxon>Metazoa</taxon>
        <taxon>Chordata</taxon>
        <taxon>Craniata</taxon>
        <taxon>Vertebrata</taxon>
        <taxon>Euteleostomi</taxon>
        <taxon>Actinopterygii</taxon>
        <taxon>Neopterygii</taxon>
        <taxon>Teleostei</taxon>
        <taxon>Neoteleostei</taxon>
        <taxon>Acanthomorphata</taxon>
        <taxon>Ovalentaria</taxon>
        <taxon>Cichlomorphae</taxon>
        <taxon>Cichliformes</taxon>
        <taxon>Cichlidae</taxon>
        <taxon>New World cichlids</taxon>
        <taxon>Cichlasomatinae</taxon>
        <taxon>Heroini</taxon>
        <taxon>Hypselecara</taxon>
    </lineage>
</organism>
<reference key="1">
    <citation type="submission" date="2001-08" db="EMBL/GenBank/DDBJ databases">
        <title>Phylogeny of the Central American Cichlidae (Teleostei: Perciformes) based on combined morphobehavioral and cytochrome b data.</title>
        <authorList>
            <person name="Rican O."/>
            <person name="Zrzavy J."/>
            <person name="Obornik M."/>
            <person name="Novak J."/>
        </authorList>
    </citation>
    <scope>NUCLEOTIDE SEQUENCE [GENOMIC DNA]</scope>
</reference>
<gene>
    <name type="primary">mt-cyb</name>
    <name type="synonym">cob</name>
    <name type="synonym">cytb</name>
    <name type="synonym">mtcyb</name>
</gene>
<protein>
    <recommendedName>
        <fullName>Cytochrome b</fullName>
    </recommendedName>
    <alternativeName>
        <fullName>Complex III subunit 3</fullName>
    </alternativeName>
    <alternativeName>
        <fullName>Complex III subunit III</fullName>
    </alternativeName>
    <alternativeName>
        <fullName>Cytochrome b-c1 complex subunit 3</fullName>
    </alternativeName>
    <alternativeName>
        <fullName>Ubiquinol-cytochrome-c reductase complex cytochrome b subunit</fullName>
    </alternativeName>
</protein>
<comment type="function">
    <text evidence="2">Component of the ubiquinol-cytochrome c reductase complex (complex III or cytochrome b-c1 complex) that is part of the mitochondrial respiratory chain. The b-c1 complex mediates electron transfer from ubiquinol to cytochrome c. Contributes to the generation of a proton gradient across the mitochondrial membrane that is then used for ATP synthesis.</text>
</comment>
<comment type="cofactor">
    <cofactor evidence="2">
        <name>heme b</name>
        <dbReference type="ChEBI" id="CHEBI:60344"/>
    </cofactor>
    <text evidence="2">Binds 2 heme b groups non-covalently.</text>
</comment>
<comment type="subunit">
    <text evidence="2">The cytochrome bc1 complex contains 3 respiratory subunits (MT-CYB, CYC1 and UQCRFS1), 2 core proteins (UQCRC1 and UQCRC2) and probably 6 low-molecular weight proteins.</text>
</comment>
<comment type="subcellular location">
    <subcellularLocation>
        <location evidence="2">Mitochondrion inner membrane</location>
        <topology evidence="2">Multi-pass membrane protein</topology>
    </subcellularLocation>
</comment>
<comment type="miscellaneous">
    <text evidence="1">Heme 1 (or BL or b562) is low-potential and absorbs at about 562 nm, and heme 2 (or BH or b566) is high-potential and absorbs at about 566 nm.</text>
</comment>
<comment type="similarity">
    <text evidence="3 4">Belongs to the cytochrome b family.</text>
</comment>
<comment type="caution">
    <text evidence="2">The full-length protein contains only eight transmembrane helices, not nine as predicted by bioinformatics tools.</text>
</comment>
<evidence type="ECO:0000250" key="1"/>
<evidence type="ECO:0000250" key="2">
    <source>
        <dbReference type="UniProtKB" id="P00157"/>
    </source>
</evidence>
<evidence type="ECO:0000255" key="3">
    <source>
        <dbReference type="PROSITE-ProRule" id="PRU00967"/>
    </source>
</evidence>
<evidence type="ECO:0000255" key="4">
    <source>
        <dbReference type="PROSITE-ProRule" id="PRU00968"/>
    </source>
</evidence>
<geneLocation type="mitochondrion"/>